<feature type="chain" id="PRO_0000165223" description="Uncharacterized protein ORF43.1 in regA 3'region">
    <location>
        <begin position="1"/>
        <end position="78"/>
    </location>
</feature>
<organism>
    <name type="scientific">Enterobacteria phage RB51</name>
    <name type="common">Bacteriophage RB51</name>
    <dbReference type="NCBI Taxonomy" id="10693"/>
    <lineage>
        <taxon>Viruses</taxon>
        <taxon>Duplodnaviria</taxon>
        <taxon>Heunggongvirae</taxon>
        <taxon>Uroviricota</taxon>
        <taxon>Caudoviricetes</taxon>
        <taxon>Straboviridae</taxon>
        <taxon>Tevenvirinae</taxon>
        <taxon>Tequatrovirus</taxon>
        <taxon>Tequatrovirus RB51</taxon>
    </lineage>
</organism>
<reference key="1">
    <citation type="journal article" date="1990" name="J. Bacteriol.">
        <title>Sequence analysis of conserved regA and variable orf43.1 genes in T4-like bacteriophages.</title>
        <authorList>
            <person name="Miller E.S."/>
            <person name="Jozwik C.E."/>
        </authorList>
    </citation>
    <scope>NUCLEOTIDE SEQUENCE [MRNA]</scope>
</reference>
<protein>
    <recommendedName>
        <fullName>Uncharacterized protein ORF43.1 in regA 3'region</fullName>
    </recommendedName>
</protein>
<dbReference type="EMBL" id="M33532">
    <property type="protein sequence ID" value="AAA72826.1"/>
    <property type="molecule type" value="mRNA"/>
</dbReference>
<dbReference type="RefSeq" id="YP_002854005.1">
    <property type="nucleotide sequence ID" value="NC_012635.1"/>
</dbReference>
<dbReference type="GeneID" id="7803558"/>
<dbReference type="KEGG" id="vg:7803558"/>
<dbReference type="OrthoDB" id="23324at10239"/>
<accession>P18244</accession>
<name>Y43_BPR51</name>
<sequence>MTQSEIQFTEAFLIFENLKQTYGLSSTQLVFDLPEDKQIEFQKEFQRLVYPRQRAFHAIIKTTNKDGKSVISRCTIEI</sequence>
<proteinExistence type="predicted"/>
<organismHost>
    <name type="scientific">Escherichia coli</name>
    <dbReference type="NCBI Taxonomy" id="562"/>
</organismHost>